<feature type="signal peptide" evidence="4">
    <location>
        <begin position="1"/>
        <end position="17"/>
    </location>
</feature>
<feature type="chain" id="PRO_0000162768" description="D-amino-acid oxidase">
    <location>
        <begin position="18"/>
        <end position="356"/>
    </location>
</feature>
<feature type="binding site" evidence="1">
    <location>
        <position position="9"/>
    </location>
    <ligand>
        <name>FAD</name>
        <dbReference type="ChEBI" id="CHEBI:57692"/>
    </ligand>
</feature>
<feature type="binding site" evidence="2">
    <location>
        <position position="44"/>
    </location>
    <ligand>
        <name>FAD</name>
        <dbReference type="ChEBI" id="CHEBI:57692"/>
    </ligand>
</feature>
<feature type="binding site" evidence="2">
    <location>
        <position position="48"/>
    </location>
    <ligand>
        <name>FAD</name>
        <dbReference type="ChEBI" id="CHEBI:57692"/>
    </ligand>
</feature>
<feature type="binding site" evidence="2">
    <location>
        <position position="50"/>
    </location>
    <ligand>
        <name>FAD</name>
        <dbReference type="ChEBI" id="CHEBI:57692"/>
    </ligand>
</feature>
<feature type="binding site" evidence="2">
    <location>
        <position position="54"/>
    </location>
    <ligand>
        <name>anthranilate</name>
        <dbReference type="ChEBI" id="CHEBI:16567"/>
        <label>2</label>
    </ligand>
</feature>
<feature type="binding site" evidence="2">
    <location>
        <position position="171"/>
    </location>
    <ligand>
        <name>FAD</name>
        <dbReference type="ChEBI" id="CHEBI:57692"/>
    </ligand>
</feature>
<feature type="binding site" evidence="2">
    <location>
        <position position="243"/>
    </location>
    <ligand>
        <name>(R)-lactate</name>
        <dbReference type="ChEBI" id="CHEBI:16004"/>
    </ligand>
</feature>
<feature type="binding site" evidence="2">
    <location>
        <position position="243"/>
    </location>
    <ligand>
        <name>anthranilate</name>
        <dbReference type="ChEBI" id="CHEBI:16567"/>
        <label>1</label>
    </ligand>
</feature>
<feature type="binding site" evidence="2">
    <location>
        <position position="302"/>
    </location>
    <ligand>
        <name>(R)-lactate</name>
        <dbReference type="ChEBI" id="CHEBI:16004"/>
    </ligand>
</feature>
<feature type="binding site" evidence="2">
    <location>
        <position position="302"/>
    </location>
    <ligand>
        <name>anthranilate</name>
        <dbReference type="ChEBI" id="CHEBI:16567"/>
        <label>1</label>
    </ligand>
</feature>
<feature type="binding site" evidence="2">
    <location>
        <position position="302"/>
    </location>
    <ligand>
        <name>FAD</name>
        <dbReference type="ChEBI" id="CHEBI:57692"/>
    </ligand>
</feature>
<feature type="binding site" evidence="1">
    <location>
        <position position="329"/>
    </location>
    <ligand>
        <name>FAD</name>
        <dbReference type="ChEBI" id="CHEBI:57692"/>
    </ligand>
</feature>
<feature type="binding site" evidence="2">
    <location>
        <position position="332"/>
    </location>
    <ligand>
        <name>FAD</name>
        <dbReference type="ChEBI" id="CHEBI:57692"/>
    </ligand>
</feature>
<feature type="binding site" evidence="2">
    <location>
        <position position="333"/>
    </location>
    <ligand>
        <name>FAD</name>
        <dbReference type="ChEBI" id="CHEBI:57692"/>
    </ligand>
</feature>
<feature type="binding site" evidence="2">
    <location>
        <position position="334"/>
    </location>
    <ligand>
        <name>FAD</name>
        <dbReference type="ChEBI" id="CHEBI:57692"/>
    </ligand>
</feature>
<feature type="glycosylation site" description="N-linked (GlcNAc...) asparagine" evidence="5">
    <location>
        <position position="192"/>
    </location>
</feature>
<feature type="glycosylation site" description="N-linked (GlcNAc...) asparagine" evidence="5">
    <location>
        <position position="262"/>
    </location>
</feature>
<feature type="mutagenesis site" description="Increases activity on cephalosporin C (CPC). The enzyme becomes more resistant to thermal inactivation." evidence="8">
    <original>F</original>
    <variation>A</variation>
    <variation>S</variation>
    <variation>Y</variation>
    <location>
        <position position="54"/>
    </location>
</feature>
<feature type="mutagenesis site" description="Increases activity." evidence="9">
    <original>C</original>
    <variation>D</variation>
    <location>
        <position position="108"/>
    </location>
</feature>
<feature type="mutagenesis site" description="Decreases activity." evidence="9">
    <original>C</original>
    <variation>S</variation>
    <location>
        <position position="108"/>
    </location>
</feature>
<feature type="mutagenesis site" description="The enzyme becomes more sensitive to thermal inactivation." evidence="9">
    <original>R</original>
    <variation>A</variation>
    <location>
        <position position="110"/>
    </location>
</feature>
<feature type="mutagenesis site" description="Loss of activity." evidence="6">
    <original>V</original>
    <variation>A</variation>
    <location>
        <position position="167"/>
    </location>
</feature>
<feature type="mutagenesis site" description="Alters substrate specificity and decreases the stability of the enzyme; when associated with A-220." evidence="15">
    <original>R</original>
    <variation>A</variation>
    <location>
        <position position="169"/>
    </location>
</feature>
<feature type="mutagenesis site" description="Alters substrate specificity and decreases the stability of the enzyme; when associated with A-169." evidence="15">
    <original>R</original>
    <variation>A</variation>
    <location>
        <position position="220"/>
    </location>
</feature>
<feature type="mutagenesis site" description="Alters substrate specificity and decreases the stability of the enzyme." evidence="15">
    <original>R</original>
    <variation>D</variation>
    <location>
        <position position="220"/>
    </location>
</feature>
<feature type="mutagenesis site" description="Inactive with D-alanine, D-serine, D-lysine, and D-threonine." evidence="12">
    <original>F</original>
    <variation>A</variation>
    <variation>S</variation>
    <variation>Y</variation>
    <location>
        <position position="258"/>
    </location>
</feature>
<feature type="mutagenesis site" description="The activity with D-tyrosine, D-leucine and D-phenylalanine increases." evidence="12">
    <original>F</original>
    <variation>A</variation>
    <variation>S</variation>
    <location>
        <position position="258"/>
    </location>
</feature>
<feature type="mutagenesis site" description="Inactive with D-valine and D-tyrosine." evidence="12">
    <original>F</original>
    <variation>Y</variation>
    <location>
        <position position="258"/>
    </location>
</feature>
<feature type="mutagenesis site" description="Loss of activity." evidence="6">
    <original>P</original>
    <variation>S</variation>
    <location>
        <position position="291"/>
    </location>
</feature>
<feature type="mutagenesis site" description="Loss of activity." evidence="6">
    <original>P</original>
    <variation>S</variation>
    <location>
        <position position="309"/>
    </location>
</feature>
<feature type="mutagenesis site" description="Loss of activity." evidence="6">
    <original>A</original>
    <variation>D</variation>
    <location>
        <position position="343"/>
    </location>
</feature>
<feature type="sequence conflict" description="In Ref. 2; AAR98816." evidence="19" ref="2">
    <original>S</original>
    <variation>N</variation>
    <location>
        <position position="87"/>
    </location>
</feature>
<feature type="sequence conflict" description="In Ref. 2; AAR98816." evidence="19" ref="2">
    <original>V</original>
    <variation>G</variation>
    <location>
        <position position="102"/>
    </location>
</feature>
<feature type="sequence conflict" description="In Ref. 2; AAR98816." evidence="19" ref="2">
    <original>R</original>
    <variation>A</variation>
    <location>
        <position position="142"/>
    </location>
</feature>
<feature type="sequence conflict" description="In Ref. 2; AAR98816." evidence="19" ref="2">
    <original>V</original>
    <variation>I</variation>
    <location>
        <position position="344"/>
    </location>
</feature>
<protein>
    <recommendedName>
        <fullName evidence="17">D-amino-acid oxidase</fullName>
        <shortName evidence="17">DAAO</shortName>
        <shortName>DAMOX</shortName>
        <shortName>DAO</shortName>
        <ecNumber evidence="7 8 9 10 11 12 14 15">1.4.3.3</ecNumber>
    </recommendedName>
    <alternativeName>
        <fullName evidence="18">TvDAO1</fullName>
    </alternativeName>
</protein>
<reference key="1">
    <citation type="journal article" date="1997" name="Yeast">
        <title>Molecular cloning of TvDAO1, a gene encoding a D-amino acid oxidase from Trigonopsis variabilis and its expression in Saccharomyces cerevisiae and Kluyveromyces lactis.</title>
        <authorList>
            <person name="Gonzalez F.J."/>
            <person name="Montes J."/>
            <person name="Martin F."/>
            <person name="Lopez M.C."/>
            <person name="Ferminan E."/>
            <person name="Catalan J."/>
            <person name="Galan M.A."/>
            <person name="Dominguez A."/>
        </authorList>
    </citation>
    <scope>NUCLEOTIDE SEQUENCE [GENOMIC DNA]</scope>
    <source>
        <strain>CBS 4095</strain>
    </source>
</reference>
<reference key="2">
    <citation type="submission" date="2003-12" db="EMBL/GenBank/DDBJ databases">
        <authorList>
            <person name="Luo H."/>
            <person name="Li Q."/>
            <person name="Yu H.-M."/>
            <person name="Shen Z.-Y."/>
        </authorList>
    </citation>
    <scope>NUCLEOTIDE SEQUENCE [MRNA]</scope>
</reference>
<reference key="3">
    <citation type="journal article" date="1993" name="J. Biol. Chem.">
        <title>Kinetic mechanism of D-amino acid oxidases from Rhodotorula gracilis and Trigonopsis variabilis.</title>
        <authorList>
            <person name="Pollegioni L."/>
            <person name="Langkau B."/>
            <person name="Tischer W."/>
            <person name="Ghisla S."/>
            <person name="Pilone M.S."/>
        </authorList>
    </citation>
    <scope>FUNCTION</scope>
    <scope>CATALYTIC ACTIVITY</scope>
</reference>
<reference key="4">
    <citation type="journal article" date="2000" name="Enzyme Microb. Technol.">
        <title>Expression of Trigonopsis variabilis D-amino acid oxidase gene in Escherichia coli and characterization of its inactive mutants.</title>
        <authorList>
            <person name="Lin L."/>
            <person name="Chien H.R."/>
            <person name="Wang W."/>
            <person name="Hwang T."/>
            <person name="Fu H."/>
            <person name="Hsu W."/>
        </authorList>
    </citation>
    <scope>BIOTECHNOLOGY</scope>
    <scope>MUTAGENESIS OF VAL-167; PRO-291; PRO-309 AND ALA-343</scope>
</reference>
<reference key="5">
    <citation type="journal article" date="2004" name="Biotechnol. Prog.">
        <title>Catalytic properties of D-amino acid oxidase in cephalosporin C bioconversion: a comparison between proteins from different sources.</title>
        <authorList>
            <person name="Pollegioni L."/>
            <person name="Caldinelli L."/>
            <person name="Molla G."/>
            <person name="Sacchi S."/>
            <person name="Pilone M.S."/>
        </authorList>
    </citation>
    <scope>FUNCTION</scope>
    <scope>CATALYTIC ACTIVITY</scope>
    <scope>BIOPHYSICOCHEMICAL PROPERTIES</scope>
</reference>
<reference key="6">
    <citation type="journal article" date="2004" name="Enzyme Microb. Technol.">
        <title>Cloning and co-expression of d-amino acid oxidase and glutaryl-7-aminocephalosporanic acid acylase genes in Escherichia coli.</title>
        <authorList>
            <person name="Luo H."/>
            <person name="Yu H."/>
            <person name="Li Q."/>
            <person name="Shen Z."/>
        </authorList>
    </citation>
    <scope>BIOTECHNOLOGY</scope>
</reference>
<reference key="7">
    <citation type="journal article" date="2010" name="Biochim. Biophys. Acta">
        <title>The role of Cys108 in Trigonopsis variabilis d-amino acid oxidase examined through chemical oxidation studies and point mutations C108S and C108D.</title>
        <authorList>
            <person name="Mueller M."/>
            <person name="Kratzer R."/>
            <person name="Schiller M."/>
            <person name="Slavica A."/>
            <person name="Rechberger G."/>
            <person name="Kollroser M."/>
            <person name="Nidetzky B."/>
        </authorList>
    </citation>
    <scope>FUNCTION</scope>
    <scope>CATALYTIC ACTIVITY</scope>
    <scope>ACTIVITY REGULATION</scope>
    <scope>BIOPHYSICOCHEMICAL PROPERTIES</scope>
    <scope>MUTAGENESIS OF CYS-108 AND ARG-110</scope>
</reference>
<reference key="8">
    <citation type="journal article" date="2010" name="Microb. Cell Fact.">
        <title>Stepwise engineering of a Pichia pastoris D-amino acid oxidase whole cell catalyst.</title>
        <authorList>
            <person name="Abad S."/>
            <person name="Nahalka J."/>
            <person name="Bergler G."/>
            <person name="Arnold S.A."/>
            <person name="Speight R."/>
            <person name="Fotheringham I."/>
            <person name="Nidetzky B."/>
            <person name="Glieder A."/>
        </authorList>
    </citation>
    <scope>FUNCTION</scope>
    <scope>CATALYTIC ACTIVITY</scope>
</reference>
<reference key="9">
    <citation type="journal article" date="2010" name="New Biotechnol.">
        <title>A single Phe54Tyr substitution improves the catalytic activity and thermostability of Trigonopsis variabilis D-amino acid oxidase.</title>
        <authorList>
            <person name="Wong K.S."/>
            <person name="Fong W.P."/>
            <person name="Tsang P.W."/>
        </authorList>
    </citation>
    <scope>FUNCTION</scope>
    <scope>CATALYTIC ACTIVITY</scope>
    <scope>BIOPHYSICOCHEMICAL PROPERTIES</scope>
    <scope>BIOTECHNOLOGY</scope>
    <scope>MUTAGENESIS OF PHE-54</scope>
</reference>
<reference key="10">
    <citation type="journal article" date="2010" name="Russ. Chem. Bull.">
        <title>The role of residues Arg169 and Arg220 in intersubunit interactions of yeast D-amino acid oxidase.</title>
        <authorList>
            <person name="Cherskova N.V."/>
            <person name="Khoronenkova S.V."/>
            <person name="Tishkov V.I."/>
        </authorList>
    </citation>
    <scope>FUNCTION</scope>
    <scope>CATALYTIC ACTIVITY</scope>
    <scope>BIOPHYSICOCHEMICAL PROPERTIES</scope>
    <scope>MUTAGENESIS OF ARG-169 AND ARG-220</scope>
</reference>
<reference key="11">
    <citation type="journal article" date="2011" name="Biotechnol. Lett.">
        <title>High-level expression of Rhodotorula gracilis D-amino acid oxidase in Pichia pastoris.</title>
        <authorList>
            <person name="Abad S."/>
            <person name="Nahalka J."/>
            <person name="Winkler M."/>
            <person name="Bergler G."/>
            <person name="Speight R."/>
            <person name="Glieder A."/>
            <person name="Nidetzky B."/>
        </authorList>
    </citation>
    <scope>FUNCTION</scope>
    <scope>CATALYTIC ACTIVITY</scope>
</reference>
<reference key="12">
    <citation type="journal article" date="2012" name="Biochemistry (Mosc.)">
        <title>Engineering of substrate specificity of D-amino acid oxidase from the yeast Trigonopsis variabilis: directed mutagenesis of Phe258 residue.</title>
        <authorList>
            <person name="Komarova N.V."/>
            <person name="Golubev I.V."/>
            <person name="Khoronenkova S.V."/>
            <person name="Chubar' T.A."/>
            <person name="Tishkov V.I."/>
        </authorList>
    </citation>
    <scope>FUNCTION</scope>
    <scope>CATALYTIC ACTIVITY</scope>
    <scope>BIOPHYSICOCHEMICAL PROPERTIES</scope>
    <scope>MUTAGENESIS OF PHE-258</scope>
</reference>
<reference key="13">
    <citation type="journal article" date="2019" name="Biotechnol. Bioeng.">
        <title>Efficient production of S-adenosyl-l-methionine from dl-methionine in metabolic engineered Saccharomyces cerevisiae.</title>
        <authorList>
            <person name="Liu W."/>
            <person name="Tang D."/>
            <person name="Shi R."/>
            <person name="Lian J."/>
            <person name="Huang L."/>
            <person name="Cai J."/>
            <person name="Xu Z."/>
        </authorList>
    </citation>
    <scope>FUNCTION</scope>
    <scope>CATALYTIC ACTIVITY</scope>
    <scope>BIOTECHNOLOGY</scope>
</reference>
<sequence length="356" mass="39301">MAKIVVIGAGVAGLTTALQLLRKGHEVTIVSEFTPGDLSIGYTSPWAGANWLTFYDGGKLADYDAVSYPILRELARSSPEAGIRLISQRSHVLKRDLPKLEVAMSAICQRNPWFKNTVDSFEIIEDRSRIVHDDVAYLVEFRSVCIHTGVYLNWLMSQCLSLGATVVKRRVNHIKDANLLHSSGSRPDVIVNCSGLFARFLGGVEDKKMYPIRGQVVLVRNSLPFMASFSSTPEKENEDEALYIMTRFDGTSIIGGCFQPNNWSSEPDPSLTHRILSRALDRFPELTKDGPLDIVRECVGHRPGREGGPRVELEKIPGVGFVVHNYGAAGAGYQSSYGMADEAVSYVERALTRPNL</sequence>
<dbReference type="EC" id="1.4.3.3" evidence="7 8 9 10 11 12 14 15"/>
<dbReference type="EMBL" id="Z50019">
    <property type="protein sequence ID" value="CAA90322.1"/>
    <property type="molecule type" value="Genomic_DNA"/>
</dbReference>
<dbReference type="EMBL" id="AY514426">
    <property type="protein sequence ID" value="AAR98816.1"/>
    <property type="molecule type" value="mRNA"/>
</dbReference>
<dbReference type="PIR" id="S39437">
    <property type="entry name" value="S39437"/>
</dbReference>
<dbReference type="SMR" id="Q99042"/>
<dbReference type="BRENDA" id="1.4.3.3">
    <property type="organism ID" value="6488"/>
</dbReference>
<dbReference type="SABIO-RK" id="Q99042"/>
<dbReference type="GO" id="GO:0005782">
    <property type="term" value="C:peroxisomal matrix"/>
    <property type="evidence" value="ECO:0000250"/>
    <property type="project" value="UniProtKB"/>
</dbReference>
<dbReference type="GO" id="GO:0005777">
    <property type="term" value="C:peroxisome"/>
    <property type="evidence" value="ECO:0000250"/>
    <property type="project" value="UniProtKB"/>
</dbReference>
<dbReference type="GO" id="GO:0003884">
    <property type="term" value="F:D-amino-acid oxidase activity"/>
    <property type="evidence" value="ECO:0000314"/>
    <property type="project" value="UniProtKB"/>
</dbReference>
<dbReference type="GO" id="GO:0071949">
    <property type="term" value="F:FAD binding"/>
    <property type="evidence" value="ECO:0007669"/>
    <property type="project" value="InterPro"/>
</dbReference>
<dbReference type="GO" id="GO:0043799">
    <property type="term" value="F:glycine oxidase activity"/>
    <property type="evidence" value="ECO:0007669"/>
    <property type="project" value="RHEA"/>
</dbReference>
<dbReference type="GO" id="GO:0019478">
    <property type="term" value="P:D-amino acid catabolic process"/>
    <property type="evidence" value="ECO:0007669"/>
    <property type="project" value="TreeGrafter"/>
</dbReference>
<dbReference type="GO" id="GO:0019740">
    <property type="term" value="P:nitrogen utilization"/>
    <property type="evidence" value="ECO:0000250"/>
    <property type="project" value="UniProtKB"/>
</dbReference>
<dbReference type="Gene3D" id="3.30.9.10">
    <property type="entry name" value="D-Amino Acid Oxidase, subunit A, domain 2"/>
    <property type="match status" value="1"/>
</dbReference>
<dbReference type="Gene3D" id="3.40.50.720">
    <property type="entry name" value="NAD(P)-binding Rossmann-like Domain"/>
    <property type="match status" value="1"/>
</dbReference>
<dbReference type="InterPro" id="IPR006181">
    <property type="entry name" value="D-amino_acid_oxidase_CS"/>
</dbReference>
<dbReference type="InterPro" id="IPR023209">
    <property type="entry name" value="DAO"/>
</dbReference>
<dbReference type="InterPro" id="IPR006076">
    <property type="entry name" value="FAD-dep_OxRdtase"/>
</dbReference>
<dbReference type="PANTHER" id="PTHR11530">
    <property type="entry name" value="D-AMINO ACID OXIDASE"/>
    <property type="match status" value="1"/>
</dbReference>
<dbReference type="PANTHER" id="PTHR11530:SF16">
    <property type="entry name" value="D-AMINO ACID OXIDASE (AFU_ORTHOLOGUE AFUA_5G11290)"/>
    <property type="match status" value="1"/>
</dbReference>
<dbReference type="Pfam" id="PF01266">
    <property type="entry name" value="DAO"/>
    <property type="match status" value="1"/>
</dbReference>
<dbReference type="PIRSF" id="PIRSF000189">
    <property type="entry name" value="D-aa_oxidase"/>
    <property type="match status" value="1"/>
</dbReference>
<dbReference type="SUPFAM" id="SSF54373">
    <property type="entry name" value="FAD-linked reductases, C-terminal domain"/>
    <property type="match status" value="1"/>
</dbReference>
<dbReference type="SUPFAM" id="SSF51971">
    <property type="entry name" value="Nucleotide-binding domain"/>
    <property type="match status" value="1"/>
</dbReference>
<dbReference type="PROSITE" id="PS00677">
    <property type="entry name" value="DAO"/>
    <property type="match status" value="1"/>
</dbReference>
<organism>
    <name type="scientific">Trigonopsis variabilis</name>
    <name type="common">Yeast</name>
    <dbReference type="NCBI Taxonomy" id="34364"/>
    <lineage>
        <taxon>Eukaryota</taxon>
        <taxon>Fungi</taxon>
        <taxon>Dikarya</taxon>
        <taxon>Ascomycota</taxon>
        <taxon>Saccharomycotina</taxon>
        <taxon>Trigonopsidomycetes</taxon>
        <taxon>Trigonopsidales</taxon>
        <taxon>Trigonopsidaceae</taxon>
        <taxon>Trigonopsis</taxon>
    </lineage>
</organism>
<gene>
    <name evidence="18" type="primary">DAO1</name>
</gene>
<comment type="function">
    <text evidence="3 7 8 9 10 11 12 13 14 15">Catalyzes the oxidative deamination of D-amino acids with broad substrate specificity (PubMed:15058991, PubMed:19909828, PubMed:20193780, PubMed:20420682, PubMed:21053050, PubMed:23157298, PubMed:31478186, PubMed:8100225, Ref.10). Enables the organism to utilize D-amino acids as a source of nutrients (By similarity).</text>
</comment>
<comment type="catalytic activity">
    <reaction evidence="7 8 9 10 11 12 14 15 20">
        <text>a D-alpha-amino acid + O2 + H2O = a 2-oxocarboxylate + H2O2 + NH4(+)</text>
        <dbReference type="Rhea" id="RHEA:21816"/>
        <dbReference type="ChEBI" id="CHEBI:15377"/>
        <dbReference type="ChEBI" id="CHEBI:15379"/>
        <dbReference type="ChEBI" id="CHEBI:16240"/>
        <dbReference type="ChEBI" id="CHEBI:28938"/>
        <dbReference type="ChEBI" id="CHEBI:35179"/>
        <dbReference type="ChEBI" id="CHEBI:59871"/>
        <dbReference type="EC" id="1.4.3.3"/>
    </reaction>
    <physiologicalReaction direction="left-to-right" evidence="7 8 9 10 11 12 14 15 20">
        <dbReference type="Rhea" id="RHEA:21817"/>
    </physiologicalReaction>
</comment>
<comment type="catalytic activity">
    <reaction evidence="7 8 11 12 14 15">
        <text>D-alanine + O2 + H2O = pyruvate + H2O2 + NH4(+)</text>
        <dbReference type="Rhea" id="RHEA:22688"/>
        <dbReference type="ChEBI" id="CHEBI:15361"/>
        <dbReference type="ChEBI" id="CHEBI:15377"/>
        <dbReference type="ChEBI" id="CHEBI:15379"/>
        <dbReference type="ChEBI" id="CHEBI:16240"/>
        <dbReference type="ChEBI" id="CHEBI:28938"/>
        <dbReference type="ChEBI" id="CHEBI:57416"/>
    </reaction>
    <physiologicalReaction direction="left-to-right" evidence="7 8 11 12 14 15">
        <dbReference type="Rhea" id="RHEA:22689"/>
    </physiologicalReaction>
</comment>
<comment type="catalytic activity">
    <reaction evidence="12">
        <text>D-serine + O2 + H2O = 3-hydroxypyruvate + H2O2 + NH4(+)</text>
        <dbReference type="Rhea" id="RHEA:70951"/>
        <dbReference type="ChEBI" id="CHEBI:15377"/>
        <dbReference type="ChEBI" id="CHEBI:15379"/>
        <dbReference type="ChEBI" id="CHEBI:16240"/>
        <dbReference type="ChEBI" id="CHEBI:17180"/>
        <dbReference type="ChEBI" id="CHEBI:28938"/>
        <dbReference type="ChEBI" id="CHEBI:35247"/>
    </reaction>
    <physiologicalReaction direction="left-to-right" evidence="12">
        <dbReference type="Rhea" id="RHEA:70952"/>
    </physiologicalReaction>
</comment>
<comment type="catalytic activity">
    <reaction evidence="12 15">
        <text>D-phenylalanine + O2 + H2O = 3-phenylpyruvate + H2O2 + NH4(+)</text>
        <dbReference type="Rhea" id="RHEA:70963"/>
        <dbReference type="ChEBI" id="CHEBI:15377"/>
        <dbReference type="ChEBI" id="CHEBI:15379"/>
        <dbReference type="ChEBI" id="CHEBI:16240"/>
        <dbReference type="ChEBI" id="CHEBI:18005"/>
        <dbReference type="ChEBI" id="CHEBI:28938"/>
        <dbReference type="ChEBI" id="CHEBI:57981"/>
    </reaction>
    <physiologicalReaction direction="left-to-right" evidence="12 15">
        <dbReference type="Rhea" id="RHEA:70964"/>
    </physiologicalReaction>
</comment>
<comment type="catalytic activity">
    <reaction evidence="12">
        <text>D-lysine + O2 + H2O = 6-amino-2-oxohexanoate + H2O2 + NH4(+)</text>
        <dbReference type="Rhea" id="RHEA:37583"/>
        <dbReference type="ChEBI" id="CHEBI:15377"/>
        <dbReference type="ChEBI" id="CHEBI:15379"/>
        <dbReference type="ChEBI" id="CHEBI:16240"/>
        <dbReference type="ChEBI" id="CHEBI:28938"/>
        <dbReference type="ChEBI" id="CHEBI:32557"/>
        <dbReference type="ChEBI" id="CHEBI:58183"/>
        <dbReference type="EC" id="1.4.3.3"/>
    </reaction>
    <physiologicalReaction direction="left-to-right" evidence="12">
        <dbReference type="Rhea" id="RHEA:37584"/>
    </physiologicalReaction>
</comment>
<comment type="catalytic activity">
    <reaction evidence="12 15">
        <text>D-tyrosine + O2 + H2O = 3-(4-hydroxyphenyl)pyruvate + H2O2 + NH4(+)</text>
        <dbReference type="Rhea" id="RHEA:70959"/>
        <dbReference type="ChEBI" id="CHEBI:15377"/>
        <dbReference type="ChEBI" id="CHEBI:15379"/>
        <dbReference type="ChEBI" id="CHEBI:16240"/>
        <dbReference type="ChEBI" id="CHEBI:28938"/>
        <dbReference type="ChEBI" id="CHEBI:36242"/>
        <dbReference type="ChEBI" id="CHEBI:58570"/>
    </reaction>
    <physiologicalReaction direction="left-to-right" evidence="12 15">
        <dbReference type="Rhea" id="RHEA:70960"/>
    </physiologicalReaction>
</comment>
<comment type="catalytic activity">
    <reaction evidence="9 10 11 12 15 20">
        <text>D-methionine + O2 + H2O = 4-methylsulfanyl-2-oxobutanoate + H2O2 + NH4(+)</text>
        <dbReference type="Rhea" id="RHEA:78207"/>
        <dbReference type="ChEBI" id="CHEBI:15377"/>
        <dbReference type="ChEBI" id="CHEBI:15379"/>
        <dbReference type="ChEBI" id="CHEBI:16240"/>
        <dbReference type="ChEBI" id="CHEBI:16723"/>
        <dbReference type="ChEBI" id="CHEBI:28938"/>
        <dbReference type="ChEBI" id="CHEBI:57932"/>
    </reaction>
    <physiologicalReaction direction="left-to-right" evidence="9 10 11 12 15 20">
        <dbReference type="Rhea" id="RHEA:78208"/>
    </physiologicalReaction>
</comment>
<comment type="catalytic activity">
    <reaction evidence="12">
        <text>D-tryptophan + O2 + H2O = indole-3-pyruvate + H2O2 + NH4(+)</text>
        <dbReference type="Rhea" id="RHEA:78247"/>
        <dbReference type="ChEBI" id="CHEBI:15377"/>
        <dbReference type="ChEBI" id="CHEBI:15379"/>
        <dbReference type="ChEBI" id="CHEBI:16240"/>
        <dbReference type="ChEBI" id="CHEBI:17640"/>
        <dbReference type="ChEBI" id="CHEBI:28938"/>
        <dbReference type="ChEBI" id="CHEBI:57719"/>
    </reaction>
    <physiologicalReaction direction="left-to-right" evidence="12">
        <dbReference type="Rhea" id="RHEA:78248"/>
    </physiologicalReaction>
</comment>
<comment type="catalytic activity">
    <reaction evidence="12 15">
        <text>D-leucine + O2 + H2O = 4-methyl-2-oxopentanoate + H2O2 + NH4(+)</text>
        <dbReference type="Rhea" id="RHEA:78211"/>
        <dbReference type="ChEBI" id="CHEBI:15377"/>
        <dbReference type="ChEBI" id="CHEBI:15379"/>
        <dbReference type="ChEBI" id="CHEBI:16240"/>
        <dbReference type="ChEBI" id="CHEBI:17865"/>
        <dbReference type="ChEBI" id="CHEBI:28938"/>
        <dbReference type="ChEBI" id="CHEBI:143079"/>
    </reaction>
    <physiologicalReaction direction="left-to-right" evidence="12 15">
        <dbReference type="Rhea" id="RHEA:78212"/>
    </physiologicalReaction>
</comment>
<comment type="catalytic activity">
    <reaction evidence="14">
        <text>D-valine + O2 + H2O = 3-methyl-2-oxobutanoate + H2O2 + NH4(+)</text>
        <dbReference type="Rhea" id="RHEA:78203"/>
        <dbReference type="ChEBI" id="CHEBI:11851"/>
        <dbReference type="ChEBI" id="CHEBI:15377"/>
        <dbReference type="ChEBI" id="CHEBI:15379"/>
        <dbReference type="ChEBI" id="CHEBI:16240"/>
        <dbReference type="ChEBI" id="CHEBI:28938"/>
        <dbReference type="ChEBI" id="CHEBI:74338"/>
    </reaction>
    <physiologicalReaction direction="left-to-right" evidence="14">
        <dbReference type="Rhea" id="RHEA:78204"/>
    </physiologicalReaction>
</comment>
<comment type="cofactor">
    <cofactor evidence="2">
        <name>FAD</name>
        <dbReference type="ChEBI" id="CHEBI:57692"/>
    </cofactor>
</comment>
<comment type="activity regulation">
    <text evidence="9">Inhibited by benzoate and hypochlorite.</text>
</comment>
<comment type="biophysicochemical properties">
    <kinetics>
        <KM evidence="12">0.46 mM for D-methionine (at 30 degrees Celsius and at pH 8.0)</KM>
        <KM evidence="15">0.24 mM for D-methionine (at 30 degrees Celsius and at pH 8.0)</KM>
        <KM evidence="12">16.7 mM for D-alanine (at 30 degrees Celsius and at pH 8.0)</KM>
        <KM evidence="8">0.4 mM for D-alanine (at 22 degrees Celsius and at pH 7.5)</KM>
        <KM evidence="15">0.3 mM for D-alanine (at 30 degrees Celsius and at pH 8.0)</KM>
        <KM evidence="7">7 mM for D-alanine (at 25 degrees Celsius and at pH 8.5)</KM>
        <KM evidence="12">36.6 mM for D-serine (at 30 degrees Celsius and at pH 8.0)</KM>
        <KM evidence="12">14.4 mM for D-valine (at 30 degrees Celsius and at pH 8.0)</KM>
        <KM evidence="12">0.45 mM for D-tyrosine (at 30 degrees Celsius and at pH 8.0)</KM>
        <KM evidence="15">0.73 mM for D-tyrosine (at 30 degrees Celsius and at pH 8.0)</KM>
        <KM evidence="12">0.49 mM for D-tryptophan (at 30 degrees Celsius and at pH 8.0)</KM>
        <KM evidence="12">0.78 mM for D-leucine (at 30 degrees Celsius and at pH 8.0)</KM>
        <KM evidence="12">0.37 mM for D-phenylalanine (at 30 degrees Celsius and at pH 8.0)</KM>
        <KM evidence="15">0.4 mM for D-phenylalanine (at 30 degrees Celsius and at pH 8.0)</KM>
        <KM evidence="12">22.6 mM for D-asparagine (at 30 degrees Celsius and at pH 8.0)</KM>
        <KM evidence="12">11.1 mM for D-threonine (at 30 degrees Celsius and at pH 8.0)</KM>
        <KM evidence="12">29.3 mM for D-lysine (at 30 degrees Celsius and at pH 8.0)</KM>
        <KM evidence="8">1.6 mM for cephalosporin C (CPC) (at 22 degrees Celsius and at pH 7.5)</KM>
        <KM evidence="7">2.4 mM for cephalosporin C (CPC) (at 25 degrees Celsius and at pH 8.5)</KM>
        <text evidence="7 8 9 12">kcat is 80.5 sec(-1) with D-methionine as substrate (at 30 degrees Celsius and at pH 8.0) (PubMed:23157298). kcat is 1.5 sec(-1) with D-methionine as substrate (PubMed:20193780). kcat is 108.6 sec(-1) with D-alanine as substrate (at 30 degrees Celsius and at pH 8.0) (PubMed:23157298). kcat is 12.7 sec(-1) with D-alanine as substrate (at 22 degrees Celsius and at pH 7.5) (PubMed:19909828). kcat is 45.7 sec(-1) with D-alanine as substrate (at 25 degrees Celsius and at pH 8.3) (PubMed:15058991). kcat is 20.5 sec(-1) with D-serine as substrate (at 30 degrees Celsius and at pH 8.0) (PubMed:23157298). kcat is 85.3 sec(-1) with D-valine as substrate (at 30 degrees Celsius and at pH 8.0) (PubMed:23157298). kcat is 22.5 sec(-1) with D-tyrosine as substrate (at 30 degrees Celsius and at pH 8.0) (PubMed:23157298). kcat is 42.4 sec(-1) with D-tryptophan as substrate (at 30 degrees Celsius and at pH 8.0) vv (PubMed:23157298). kcat is 29.1 sec(-1) with D-leucine as substrate (at 30 degrees Celsius and at pH 8.0) (PubMed:23157298). kcat is 27.2 sec(-1) with D-phenylalanine as substrate (at 30 degrees Celsius and at pH 8.0) (PubMed:23157298). kcat is 62.4 sec(-1) with D-asparagine as substrate (at 30 degrees Celsius and at pH 8.0) (PubMed:23157298). kcat is 1.75 sec(-1) with D-threonine as substrate (at 30 degrees Celsius and at pH 8.0) (PubMed:23157298). kcat is 3.54 sec(-1) with D-lysine as substrate (at 30 degrees Celsius and at pH 8.0) (PubMed:23157298). kcat is 6.2 sec(-1) with cephalosporin C (CPC) as substrate (at 22 degrees Celsius and at pH 7.5) (PubMed:19909828). kcat is 71.7 sec(-1) with cephalosporin C (CPC) as substrate (at 25 degrees Celsius and at pH 8.3) (PubMed:15058991).</text>
    </kinetics>
    <phDependence>
        <text evidence="7 8">Optimum pH is around 9 (PubMed:19909828). Optimum pH is around 7.5 (PubMed:15058991).</text>
    </phDependence>
</comment>
<comment type="subcellular location">
    <subcellularLocation>
        <location evidence="2">Peroxisome matrix</location>
    </subcellularLocation>
</comment>
<comment type="biotechnology">
    <text evidence="6 8 13 16">Capable of converting cephalosporin C (CPC) into 7-beta-(5-carboxy-5-oxopentanamido)-cephalosporinic acid, an initial material of different beta-lactam antibiotics (PubMed:10978770, PubMed:19909828, Ref.6). Has been used to resolve racemic mixtures of D,L-amino acids to yield enantiomerically pure isomers for pharmacological and peptide research uses (PubMed:31478186).</text>
</comment>
<comment type="similarity">
    <text evidence="19">Belongs to the DAMOX/DASOX family.</text>
</comment>
<name>OXDA_TRIVR</name>
<accession>Q99042</accession>
<accession>Q6R4Q9</accession>
<evidence type="ECO:0000250" key="1">
    <source>
        <dbReference type="UniProtKB" id="A0A499UB99"/>
    </source>
</evidence>
<evidence type="ECO:0000250" key="2">
    <source>
        <dbReference type="UniProtKB" id="P80324"/>
    </source>
</evidence>
<evidence type="ECO:0000250" key="3">
    <source>
        <dbReference type="UniProtKB" id="Q9HGY3"/>
    </source>
</evidence>
<evidence type="ECO:0000255" key="4"/>
<evidence type="ECO:0000255" key="5">
    <source>
        <dbReference type="PROSITE-ProRule" id="PRU00498"/>
    </source>
</evidence>
<evidence type="ECO:0000269" key="6">
    <source>
    </source>
</evidence>
<evidence type="ECO:0000269" key="7">
    <source>
    </source>
</evidence>
<evidence type="ECO:0000269" key="8">
    <source>
    </source>
</evidence>
<evidence type="ECO:0000269" key="9">
    <source>
    </source>
</evidence>
<evidence type="ECO:0000269" key="10">
    <source>
    </source>
</evidence>
<evidence type="ECO:0000269" key="11">
    <source>
    </source>
</evidence>
<evidence type="ECO:0000269" key="12">
    <source>
    </source>
</evidence>
<evidence type="ECO:0000269" key="13">
    <source>
    </source>
</evidence>
<evidence type="ECO:0000269" key="14">
    <source>
    </source>
</evidence>
<evidence type="ECO:0000269" key="15">
    <source ref="10"/>
</evidence>
<evidence type="ECO:0000269" key="16">
    <source ref="6"/>
</evidence>
<evidence type="ECO:0000303" key="17">
    <source>
    </source>
</evidence>
<evidence type="ECO:0000303" key="18">
    <source>
    </source>
</evidence>
<evidence type="ECO:0000305" key="19"/>
<evidence type="ECO:0000305" key="20">
    <source>
    </source>
</evidence>
<keyword id="KW-0274">FAD</keyword>
<keyword id="KW-0285">Flavoprotein</keyword>
<keyword id="KW-0325">Glycoprotein</keyword>
<keyword id="KW-0560">Oxidoreductase</keyword>
<keyword id="KW-0576">Peroxisome</keyword>
<keyword id="KW-0732">Signal</keyword>
<proteinExistence type="evidence at protein level"/>